<sequence>MTFQDIILTLQKYWAEKGCVLVQPYDMEVGAGTFHPETLLRSLGPEPWKTAYVQPSRRPTDGRYGENPNRLQHYYQFQVIIKPSPDDVQGLYLDSLKAIGIDPLAHDIRFVEDDWESPTLGAAGLGWEVWLDGMEITQFTYFQLAGSIELSPVTVELTYGLERIAMYLQEIDNVYELDWNGVVKYGDLHHMNEVEQSTYNFEVANVDMLLGFFDSYEAEAKACLEKELVLPAYEYCLKCSHTFNLLDARGAISVTERTGYIARIRNMARGCAEKYLEQRESMGFPLAK</sequence>
<proteinExistence type="inferred from homology"/>
<keyword id="KW-0030">Aminoacyl-tRNA synthetase</keyword>
<keyword id="KW-0067">ATP-binding</keyword>
<keyword id="KW-0963">Cytoplasm</keyword>
<keyword id="KW-0436">Ligase</keyword>
<keyword id="KW-0547">Nucleotide-binding</keyword>
<keyword id="KW-0648">Protein biosynthesis</keyword>
<keyword id="KW-1185">Reference proteome</keyword>
<dbReference type="EC" id="6.1.1.14" evidence="1"/>
<dbReference type="EMBL" id="CP001322">
    <property type="protein sequence ID" value="ACL01754.1"/>
    <property type="molecule type" value="Genomic_DNA"/>
</dbReference>
<dbReference type="RefSeq" id="WP_012609194.1">
    <property type="nucleotide sequence ID" value="NC_011768.1"/>
</dbReference>
<dbReference type="SMR" id="B8FKD9"/>
<dbReference type="KEGG" id="dal:Dalk_0044"/>
<dbReference type="eggNOG" id="COG0752">
    <property type="taxonomic scope" value="Bacteria"/>
</dbReference>
<dbReference type="HOGENOM" id="CLU_057066_1_0_7"/>
<dbReference type="Proteomes" id="UP000000739">
    <property type="component" value="Chromosome"/>
</dbReference>
<dbReference type="GO" id="GO:0005829">
    <property type="term" value="C:cytosol"/>
    <property type="evidence" value="ECO:0007669"/>
    <property type="project" value="TreeGrafter"/>
</dbReference>
<dbReference type="GO" id="GO:0005524">
    <property type="term" value="F:ATP binding"/>
    <property type="evidence" value="ECO:0007669"/>
    <property type="project" value="UniProtKB-UniRule"/>
</dbReference>
<dbReference type="GO" id="GO:0004820">
    <property type="term" value="F:glycine-tRNA ligase activity"/>
    <property type="evidence" value="ECO:0007669"/>
    <property type="project" value="UniProtKB-UniRule"/>
</dbReference>
<dbReference type="GO" id="GO:0006426">
    <property type="term" value="P:glycyl-tRNA aminoacylation"/>
    <property type="evidence" value="ECO:0007669"/>
    <property type="project" value="UniProtKB-UniRule"/>
</dbReference>
<dbReference type="CDD" id="cd00733">
    <property type="entry name" value="GlyRS_alpha_core"/>
    <property type="match status" value="1"/>
</dbReference>
<dbReference type="FunFam" id="3.30.930.10:FF:000006">
    <property type="entry name" value="Glycine--tRNA ligase alpha subunit"/>
    <property type="match status" value="1"/>
</dbReference>
<dbReference type="Gene3D" id="3.30.930.10">
    <property type="entry name" value="Bira Bifunctional Protein, Domain 2"/>
    <property type="match status" value="1"/>
</dbReference>
<dbReference type="Gene3D" id="1.20.58.180">
    <property type="entry name" value="Class II aaRS and biotin synthetases, domain 2"/>
    <property type="match status" value="1"/>
</dbReference>
<dbReference type="HAMAP" id="MF_00254">
    <property type="entry name" value="Gly_tRNA_synth_alpha"/>
    <property type="match status" value="1"/>
</dbReference>
<dbReference type="InterPro" id="IPR045864">
    <property type="entry name" value="aa-tRNA-synth_II/BPL/LPL"/>
</dbReference>
<dbReference type="InterPro" id="IPR006194">
    <property type="entry name" value="Gly-tRNA-synth_heterodimer"/>
</dbReference>
<dbReference type="InterPro" id="IPR002310">
    <property type="entry name" value="Gly-tRNA_ligase_asu"/>
</dbReference>
<dbReference type="NCBIfam" id="TIGR00388">
    <property type="entry name" value="glyQ"/>
    <property type="match status" value="1"/>
</dbReference>
<dbReference type="NCBIfam" id="NF006827">
    <property type="entry name" value="PRK09348.1"/>
    <property type="match status" value="1"/>
</dbReference>
<dbReference type="PANTHER" id="PTHR30075:SF2">
    <property type="entry name" value="GLYCINE--TRNA LIGASE, CHLOROPLASTIC_MITOCHONDRIAL 2"/>
    <property type="match status" value="1"/>
</dbReference>
<dbReference type="PANTHER" id="PTHR30075">
    <property type="entry name" value="GLYCYL-TRNA SYNTHETASE"/>
    <property type="match status" value="1"/>
</dbReference>
<dbReference type="Pfam" id="PF02091">
    <property type="entry name" value="tRNA-synt_2e"/>
    <property type="match status" value="1"/>
</dbReference>
<dbReference type="PRINTS" id="PR01044">
    <property type="entry name" value="TRNASYNTHGA"/>
</dbReference>
<dbReference type="SUPFAM" id="SSF55681">
    <property type="entry name" value="Class II aaRS and biotin synthetases"/>
    <property type="match status" value="1"/>
</dbReference>
<dbReference type="PROSITE" id="PS50861">
    <property type="entry name" value="AA_TRNA_LIGASE_II_GLYAB"/>
    <property type="match status" value="1"/>
</dbReference>
<feature type="chain" id="PRO_1000197175" description="Glycine--tRNA ligase alpha subunit">
    <location>
        <begin position="1"/>
        <end position="288"/>
    </location>
</feature>
<organism>
    <name type="scientific">Desulfatibacillum aliphaticivorans</name>
    <dbReference type="NCBI Taxonomy" id="218208"/>
    <lineage>
        <taxon>Bacteria</taxon>
        <taxon>Pseudomonadati</taxon>
        <taxon>Thermodesulfobacteriota</taxon>
        <taxon>Desulfobacteria</taxon>
        <taxon>Desulfobacterales</taxon>
        <taxon>Desulfatibacillaceae</taxon>
        <taxon>Desulfatibacillum</taxon>
    </lineage>
</organism>
<gene>
    <name evidence="1" type="primary">glyQ</name>
    <name type="ordered locus">Dalk_0044</name>
</gene>
<comment type="catalytic activity">
    <reaction evidence="1">
        <text>tRNA(Gly) + glycine + ATP = glycyl-tRNA(Gly) + AMP + diphosphate</text>
        <dbReference type="Rhea" id="RHEA:16013"/>
        <dbReference type="Rhea" id="RHEA-COMP:9664"/>
        <dbReference type="Rhea" id="RHEA-COMP:9683"/>
        <dbReference type="ChEBI" id="CHEBI:30616"/>
        <dbReference type="ChEBI" id="CHEBI:33019"/>
        <dbReference type="ChEBI" id="CHEBI:57305"/>
        <dbReference type="ChEBI" id="CHEBI:78442"/>
        <dbReference type="ChEBI" id="CHEBI:78522"/>
        <dbReference type="ChEBI" id="CHEBI:456215"/>
        <dbReference type="EC" id="6.1.1.14"/>
    </reaction>
</comment>
<comment type="subunit">
    <text evidence="1">Tetramer of two alpha and two beta subunits.</text>
</comment>
<comment type="subcellular location">
    <subcellularLocation>
        <location evidence="1">Cytoplasm</location>
    </subcellularLocation>
</comment>
<comment type="similarity">
    <text evidence="1">Belongs to the class-II aminoacyl-tRNA synthetase family.</text>
</comment>
<name>SYGA_DESAL</name>
<reference key="1">
    <citation type="journal article" date="2012" name="Environ. Microbiol.">
        <title>The genome sequence of Desulfatibacillum alkenivorans AK-01: a blueprint for anaerobic alkane oxidation.</title>
        <authorList>
            <person name="Callaghan A.V."/>
            <person name="Morris B.E."/>
            <person name="Pereira I.A."/>
            <person name="McInerney M.J."/>
            <person name="Austin R.N."/>
            <person name="Groves J.T."/>
            <person name="Kukor J.J."/>
            <person name="Suflita J.M."/>
            <person name="Young L.Y."/>
            <person name="Zylstra G.J."/>
            <person name="Wawrik B."/>
        </authorList>
    </citation>
    <scope>NUCLEOTIDE SEQUENCE [LARGE SCALE GENOMIC DNA]</scope>
    <source>
        <strain>AK-01</strain>
    </source>
</reference>
<accession>B8FKD9</accession>
<evidence type="ECO:0000255" key="1">
    <source>
        <dbReference type="HAMAP-Rule" id="MF_00254"/>
    </source>
</evidence>
<protein>
    <recommendedName>
        <fullName evidence="1">Glycine--tRNA ligase alpha subunit</fullName>
        <ecNumber evidence="1">6.1.1.14</ecNumber>
    </recommendedName>
    <alternativeName>
        <fullName evidence="1">Glycyl-tRNA synthetase alpha subunit</fullName>
        <shortName evidence="1">GlyRS</shortName>
    </alternativeName>
</protein>